<name>DXR_SYNJB</name>
<evidence type="ECO:0000255" key="1">
    <source>
        <dbReference type="HAMAP-Rule" id="MF_00183"/>
    </source>
</evidence>
<reference key="1">
    <citation type="journal article" date="2007" name="ISME J.">
        <title>Population level functional diversity in a microbial community revealed by comparative genomic and metagenomic analyses.</title>
        <authorList>
            <person name="Bhaya D."/>
            <person name="Grossman A.R."/>
            <person name="Steunou A.-S."/>
            <person name="Khuri N."/>
            <person name="Cohan F.M."/>
            <person name="Hamamura N."/>
            <person name="Melendrez M.C."/>
            <person name="Bateson M.M."/>
            <person name="Ward D.M."/>
            <person name="Heidelberg J.F."/>
        </authorList>
    </citation>
    <scope>NUCLEOTIDE SEQUENCE [LARGE SCALE GENOMIC DNA]</scope>
    <source>
        <strain>JA-2-3B'a(2-13)</strain>
    </source>
</reference>
<accession>Q2JM39</accession>
<comment type="function">
    <text evidence="1">Catalyzes the NADPH-dependent rearrangement and reduction of 1-deoxy-D-xylulose-5-phosphate (DXP) to 2-C-methyl-D-erythritol 4-phosphate (MEP).</text>
</comment>
<comment type="catalytic activity">
    <reaction evidence="1">
        <text>2-C-methyl-D-erythritol 4-phosphate + NADP(+) = 1-deoxy-D-xylulose 5-phosphate + NADPH + H(+)</text>
        <dbReference type="Rhea" id="RHEA:13717"/>
        <dbReference type="ChEBI" id="CHEBI:15378"/>
        <dbReference type="ChEBI" id="CHEBI:57783"/>
        <dbReference type="ChEBI" id="CHEBI:57792"/>
        <dbReference type="ChEBI" id="CHEBI:58262"/>
        <dbReference type="ChEBI" id="CHEBI:58349"/>
        <dbReference type="EC" id="1.1.1.267"/>
    </reaction>
    <physiologicalReaction direction="right-to-left" evidence="1">
        <dbReference type="Rhea" id="RHEA:13719"/>
    </physiologicalReaction>
</comment>
<comment type="cofactor">
    <cofactor evidence="1">
        <name>Mg(2+)</name>
        <dbReference type="ChEBI" id="CHEBI:18420"/>
    </cofactor>
    <cofactor evidence="1">
        <name>Mn(2+)</name>
        <dbReference type="ChEBI" id="CHEBI:29035"/>
    </cofactor>
</comment>
<comment type="pathway">
    <text evidence="1">Isoprenoid biosynthesis; isopentenyl diphosphate biosynthesis via DXP pathway; isopentenyl diphosphate from 1-deoxy-D-xylulose 5-phosphate: step 1/6.</text>
</comment>
<comment type="similarity">
    <text evidence="1">Belongs to the DXR family.</text>
</comment>
<feature type="chain" id="PRO_1000020318" description="1-deoxy-D-xylulose 5-phosphate reductoisomerase">
    <location>
        <begin position="1"/>
        <end position="392"/>
    </location>
</feature>
<feature type="binding site" evidence="1">
    <location>
        <position position="10"/>
    </location>
    <ligand>
        <name>NADPH</name>
        <dbReference type="ChEBI" id="CHEBI:57783"/>
    </ligand>
</feature>
<feature type="binding site" evidence="1">
    <location>
        <position position="11"/>
    </location>
    <ligand>
        <name>NADPH</name>
        <dbReference type="ChEBI" id="CHEBI:57783"/>
    </ligand>
</feature>
<feature type="binding site" evidence="1">
    <location>
        <position position="12"/>
    </location>
    <ligand>
        <name>NADPH</name>
        <dbReference type="ChEBI" id="CHEBI:57783"/>
    </ligand>
</feature>
<feature type="binding site" evidence="1">
    <location>
        <position position="13"/>
    </location>
    <ligand>
        <name>NADPH</name>
        <dbReference type="ChEBI" id="CHEBI:57783"/>
    </ligand>
</feature>
<feature type="binding site" evidence="1">
    <location>
        <position position="38"/>
    </location>
    <ligand>
        <name>NADPH</name>
        <dbReference type="ChEBI" id="CHEBI:57783"/>
    </ligand>
</feature>
<feature type="binding site" evidence="1">
    <location>
        <position position="124"/>
    </location>
    <ligand>
        <name>NADPH</name>
        <dbReference type="ChEBI" id="CHEBI:57783"/>
    </ligand>
</feature>
<feature type="binding site" evidence="1">
    <location>
        <position position="125"/>
    </location>
    <ligand>
        <name>1-deoxy-D-xylulose 5-phosphate</name>
        <dbReference type="ChEBI" id="CHEBI:57792"/>
    </ligand>
</feature>
<feature type="binding site" evidence="1">
    <location>
        <position position="126"/>
    </location>
    <ligand>
        <name>NADPH</name>
        <dbReference type="ChEBI" id="CHEBI:57783"/>
    </ligand>
</feature>
<feature type="binding site" evidence="1">
    <location>
        <position position="150"/>
    </location>
    <ligand>
        <name>Mn(2+)</name>
        <dbReference type="ChEBI" id="CHEBI:29035"/>
    </ligand>
</feature>
<feature type="binding site" evidence="1">
    <location>
        <position position="151"/>
    </location>
    <ligand>
        <name>1-deoxy-D-xylulose 5-phosphate</name>
        <dbReference type="ChEBI" id="CHEBI:57792"/>
    </ligand>
</feature>
<feature type="binding site" evidence="1">
    <location>
        <position position="152"/>
    </location>
    <ligand>
        <name>1-deoxy-D-xylulose 5-phosphate</name>
        <dbReference type="ChEBI" id="CHEBI:57792"/>
    </ligand>
</feature>
<feature type="binding site" evidence="1">
    <location>
        <position position="152"/>
    </location>
    <ligand>
        <name>Mn(2+)</name>
        <dbReference type="ChEBI" id="CHEBI:29035"/>
    </ligand>
</feature>
<feature type="binding site" evidence="1">
    <location>
        <position position="176"/>
    </location>
    <ligand>
        <name>1-deoxy-D-xylulose 5-phosphate</name>
        <dbReference type="ChEBI" id="CHEBI:57792"/>
    </ligand>
</feature>
<feature type="binding site" evidence="1">
    <location>
        <position position="199"/>
    </location>
    <ligand>
        <name>1-deoxy-D-xylulose 5-phosphate</name>
        <dbReference type="ChEBI" id="CHEBI:57792"/>
    </ligand>
</feature>
<feature type="binding site" evidence="1">
    <location>
        <position position="205"/>
    </location>
    <ligand>
        <name>NADPH</name>
        <dbReference type="ChEBI" id="CHEBI:57783"/>
    </ligand>
</feature>
<feature type="binding site" evidence="1">
    <location>
        <position position="212"/>
    </location>
    <ligand>
        <name>1-deoxy-D-xylulose 5-phosphate</name>
        <dbReference type="ChEBI" id="CHEBI:57792"/>
    </ligand>
</feature>
<feature type="binding site" evidence="1">
    <location>
        <position position="217"/>
    </location>
    <ligand>
        <name>1-deoxy-D-xylulose 5-phosphate</name>
        <dbReference type="ChEBI" id="CHEBI:57792"/>
    </ligand>
</feature>
<feature type="binding site" evidence="1">
    <location>
        <position position="218"/>
    </location>
    <ligand>
        <name>1-deoxy-D-xylulose 5-phosphate</name>
        <dbReference type="ChEBI" id="CHEBI:57792"/>
    </ligand>
</feature>
<feature type="binding site" evidence="1">
    <location>
        <position position="221"/>
    </location>
    <ligand>
        <name>1-deoxy-D-xylulose 5-phosphate</name>
        <dbReference type="ChEBI" id="CHEBI:57792"/>
    </ligand>
</feature>
<feature type="binding site" evidence="1">
    <location>
        <position position="221"/>
    </location>
    <ligand>
        <name>Mn(2+)</name>
        <dbReference type="ChEBI" id="CHEBI:29035"/>
    </ligand>
</feature>
<gene>
    <name evidence="1" type="primary">dxr</name>
    <name type="ordered locus">CYB_1233</name>
</gene>
<dbReference type="EC" id="1.1.1.267" evidence="1"/>
<dbReference type="EMBL" id="CP000240">
    <property type="protein sequence ID" value="ABD02208.1"/>
    <property type="molecule type" value="Genomic_DNA"/>
</dbReference>
<dbReference type="RefSeq" id="WP_011432861.1">
    <property type="nucleotide sequence ID" value="NC_007776.1"/>
</dbReference>
<dbReference type="SMR" id="Q2JM39"/>
<dbReference type="STRING" id="321332.CYB_1233"/>
<dbReference type="KEGG" id="cyb:CYB_1233"/>
<dbReference type="eggNOG" id="COG0743">
    <property type="taxonomic scope" value="Bacteria"/>
</dbReference>
<dbReference type="HOGENOM" id="CLU_035714_4_0_3"/>
<dbReference type="OrthoDB" id="9806546at2"/>
<dbReference type="UniPathway" id="UPA00056">
    <property type="reaction ID" value="UER00092"/>
</dbReference>
<dbReference type="Proteomes" id="UP000001938">
    <property type="component" value="Chromosome"/>
</dbReference>
<dbReference type="GO" id="GO:0030604">
    <property type="term" value="F:1-deoxy-D-xylulose-5-phosphate reductoisomerase activity"/>
    <property type="evidence" value="ECO:0007669"/>
    <property type="project" value="UniProtKB-UniRule"/>
</dbReference>
<dbReference type="GO" id="GO:0030145">
    <property type="term" value="F:manganese ion binding"/>
    <property type="evidence" value="ECO:0007669"/>
    <property type="project" value="TreeGrafter"/>
</dbReference>
<dbReference type="GO" id="GO:0070402">
    <property type="term" value="F:NADPH binding"/>
    <property type="evidence" value="ECO:0007669"/>
    <property type="project" value="InterPro"/>
</dbReference>
<dbReference type="GO" id="GO:0051484">
    <property type="term" value="P:isopentenyl diphosphate biosynthetic process, methylerythritol 4-phosphate pathway involved in terpenoid biosynthetic process"/>
    <property type="evidence" value="ECO:0007669"/>
    <property type="project" value="TreeGrafter"/>
</dbReference>
<dbReference type="FunFam" id="3.40.50.720:FF:000045">
    <property type="entry name" value="1-deoxy-D-xylulose 5-phosphate reductoisomerase"/>
    <property type="match status" value="1"/>
</dbReference>
<dbReference type="Gene3D" id="1.10.1740.10">
    <property type="match status" value="1"/>
</dbReference>
<dbReference type="Gene3D" id="3.40.50.720">
    <property type="entry name" value="NAD(P)-binding Rossmann-like Domain"/>
    <property type="match status" value="1"/>
</dbReference>
<dbReference type="HAMAP" id="MF_00183">
    <property type="entry name" value="DXP_reductoisom"/>
    <property type="match status" value="1"/>
</dbReference>
<dbReference type="InterPro" id="IPR003821">
    <property type="entry name" value="DXP_reductoisomerase"/>
</dbReference>
<dbReference type="InterPro" id="IPR013644">
    <property type="entry name" value="DXP_reductoisomerase_C"/>
</dbReference>
<dbReference type="InterPro" id="IPR013512">
    <property type="entry name" value="DXP_reductoisomerase_N"/>
</dbReference>
<dbReference type="InterPro" id="IPR026877">
    <property type="entry name" value="DXPR_C"/>
</dbReference>
<dbReference type="InterPro" id="IPR036169">
    <property type="entry name" value="DXPR_C_sf"/>
</dbReference>
<dbReference type="InterPro" id="IPR036291">
    <property type="entry name" value="NAD(P)-bd_dom_sf"/>
</dbReference>
<dbReference type="NCBIfam" id="TIGR00243">
    <property type="entry name" value="Dxr"/>
    <property type="match status" value="1"/>
</dbReference>
<dbReference type="NCBIfam" id="NF009114">
    <property type="entry name" value="PRK12464.1"/>
    <property type="match status" value="1"/>
</dbReference>
<dbReference type="PANTHER" id="PTHR30525">
    <property type="entry name" value="1-DEOXY-D-XYLULOSE 5-PHOSPHATE REDUCTOISOMERASE"/>
    <property type="match status" value="1"/>
</dbReference>
<dbReference type="PANTHER" id="PTHR30525:SF0">
    <property type="entry name" value="1-DEOXY-D-XYLULOSE 5-PHOSPHATE REDUCTOISOMERASE, CHLOROPLASTIC"/>
    <property type="match status" value="1"/>
</dbReference>
<dbReference type="Pfam" id="PF08436">
    <property type="entry name" value="DXP_redisom_C"/>
    <property type="match status" value="1"/>
</dbReference>
<dbReference type="Pfam" id="PF02670">
    <property type="entry name" value="DXP_reductoisom"/>
    <property type="match status" value="1"/>
</dbReference>
<dbReference type="Pfam" id="PF13288">
    <property type="entry name" value="DXPR_C"/>
    <property type="match status" value="1"/>
</dbReference>
<dbReference type="PIRSF" id="PIRSF006205">
    <property type="entry name" value="Dxp_reductismrs"/>
    <property type="match status" value="1"/>
</dbReference>
<dbReference type="SUPFAM" id="SSF69055">
    <property type="entry name" value="1-deoxy-D-xylulose-5-phosphate reductoisomerase, C-terminal domain"/>
    <property type="match status" value="1"/>
</dbReference>
<dbReference type="SUPFAM" id="SSF55347">
    <property type="entry name" value="Glyceraldehyde-3-phosphate dehydrogenase-like, C-terminal domain"/>
    <property type="match status" value="1"/>
</dbReference>
<dbReference type="SUPFAM" id="SSF51735">
    <property type="entry name" value="NAD(P)-binding Rossmann-fold domains"/>
    <property type="match status" value="1"/>
</dbReference>
<keyword id="KW-0414">Isoprene biosynthesis</keyword>
<keyword id="KW-0464">Manganese</keyword>
<keyword id="KW-0479">Metal-binding</keyword>
<keyword id="KW-0521">NADP</keyword>
<keyword id="KW-0560">Oxidoreductase</keyword>
<keyword id="KW-1185">Reference proteome</keyword>
<protein>
    <recommendedName>
        <fullName evidence="1">1-deoxy-D-xylulose 5-phosphate reductoisomerase</fullName>
        <shortName evidence="1">DXP reductoisomerase</shortName>
        <ecNumber evidence="1">1.1.1.267</ecNumber>
    </recommendedName>
    <alternativeName>
        <fullName evidence="1">1-deoxyxylulose-5-phosphate reductoisomerase</fullName>
    </alternativeName>
    <alternativeName>
        <fullName evidence="1">2-C-methyl-D-erythritol 4-phosphate synthase</fullName>
    </alternativeName>
</protein>
<organism>
    <name type="scientific">Synechococcus sp. (strain JA-2-3B'a(2-13))</name>
    <name type="common">Cyanobacteria bacterium Yellowstone B-Prime</name>
    <dbReference type="NCBI Taxonomy" id="321332"/>
    <lineage>
        <taxon>Bacteria</taxon>
        <taxon>Bacillati</taxon>
        <taxon>Cyanobacteriota</taxon>
        <taxon>Cyanophyceae</taxon>
        <taxon>Synechococcales</taxon>
        <taxon>Synechococcaceae</taxon>
        <taxon>Synechococcus</taxon>
    </lineage>
</organism>
<sequence length="392" mass="42668">MQAITLLGSTGSIGTQTLDLVAQYPERFQVVGLTSYSNVALLAEQVRRFRPQMVAIGREELLPELRSLLTGIRPLPELVAGTEGLCQVAAHPAAQRVVTGIVGCAGLLPTLAAIRAGKDIALANKETLVAGGPVVLPLVREYGVNLIPVDSEHSAIFQCLQGVPAGSLRRILLTASGGAFRDWPAEKLDQVTLADALKHPNWVMGRKITIDSATLMNKGLEVIEAHWLFGLDYDHIDILIHPQSIVHSLIELADTSVLAQLGWPDMHLPILYGLSWPERLATPWDPLDLVKLGSLTFKAPDHRKYPCMELAYAAGRRGGTLPAVLNAANEAAVALFLQERIRFLDIPRLLERVCERHQVIADPSLEDILQADAWARRETAQLAQQAPAQVLA</sequence>
<proteinExistence type="inferred from homology"/>